<proteinExistence type="evidence at transcript level"/>
<sequence length="429" mass="43523">MDRLLACLLGFLLIASVGSHAARTPEQYWKSALPNSPIPSSLSQLLSTAGGGTSVNVGGGGVHVDAGHGKPGGTTVDVGKGGVGVNVKPGYGKPGGTTVGVGKGGVGVNVKPGYGKPGGTSVGVGKGGVGVNVQPGYGKPGGTTVGVGKGGVGVNVQPGYGKPGGTTVGVGKGGVGVNVKPRGKPVHVNVAPFIYNYAATETQLHDDPNVALFFLEKDLHPGKTMAVHFTATTAGEKFLPRSEADAMPFSSEKVPEILSRFSVKPGSVEAAEMAQTLRDCEAPPAQGERKACATSLESMVDFATSSLGTSHVRAASTVVGKEGSPEQEYTVTAVKRAAAGGDQDQLVACHAEPYAYAVFACHLTRATRAYAVSMAGRDGTGVEAVAVCHADTAGWNPKHVAFQVLKVKPGTVPVCHFLPQDHVVWTRSG</sequence>
<dbReference type="EMBL" id="AP003309">
    <property type="protein sequence ID" value="BAB89935.1"/>
    <property type="molecule type" value="Genomic_DNA"/>
</dbReference>
<dbReference type="EMBL" id="AP003560">
    <property type="protein sequence ID" value="BAB68072.1"/>
    <property type="molecule type" value="Genomic_DNA"/>
</dbReference>
<dbReference type="EMBL" id="AP008207">
    <property type="protein sequence ID" value="BAF06075.1"/>
    <property type="molecule type" value="Genomic_DNA"/>
</dbReference>
<dbReference type="EMBL" id="AP014957">
    <property type="protein sequence ID" value="BAS74205.1"/>
    <property type="molecule type" value="Genomic_DNA"/>
</dbReference>
<dbReference type="EMBL" id="CM000138">
    <property type="protein sequence ID" value="EAZ13440.1"/>
    <property type="molecule type" value="Genomic_DNA"/>
</dbReference>
<dbReference type="EMBL" id="AK065358">
    <property type="protein sequence ID" value="BAG89485.1"/>
    <property type="molecule type" value="mRNA"/>
</dbReference>
<dbReference type="EMBL" id="AK106043">
    <property type="protein sequence ID" value="BAG97527.1"/>
    <property type="molecule type" value="mRNA"/>
</dbReference>
<dbReference type="RefSeq" id="XP_015630857.1">
    <property type="nucleotide sequence ID" value="XM_015775371.1"/>
</dbReference>
<dbReference type="SMR" id="Q942D4"/>
<dbReference type="FunCoup" id="Q942D4">
    <property type="interactions" value="1307"/>
</dbReference>
<dbReference type="STRING" id="39947.Q942D4"/>
<dbReference type="PaxDb" id="39947-Q942D4"/>
<dbReference type="EnsemblPlants" id="Os01t0733500-01">
    <property type="protein sequence ID" value="Os01t0733500-01"/>
    <property type="gene ID" value="Os01g0733500"/>
</dbReference>
<dbReference type="Gramene" id="Os01t0733500-01">
    <property type="protein sequence ID" value="Os01t0733500-01"/>
    <property type="gene ID" value="Os01g0733500"/>
</dbReference>
<dbReference type="KEGG" id="dosa:Os01g0733500"/>
<dbReference type="eggNOG" id="ENOG502QQHP">
    <property type="taxonomic scope" value="Eukaryota"/>
</dbReference>
<dbReference type="HOGENOM" id="CLU_011822_1_1_1"/>
<dbReference type="InParanoid" id="Q942D4"/>
<dbReference type="OMA" id="NVAPFIY"/>
<dbReference type="OrthoDB" id="780559at2759"/>
<dbReference type="Proteomes" id="UP000000763">
    <property type="component" value="Chromosome 1"/>
</dbReference>
<dbReference type="Proteomes" id="UP000007752">
    <property type="component" value="Chromosome 1"/>
</dbReference>
<dbReference type="Proteomes" id="UP000059680">
    <property type="component" value="Chromosome 1"/>
</dbReference>
<dbReference type="InterPro" id="IPR044816">
    <property type="entry name" value="BURP"/>
</dbReference>
<dbReference type="InterPro" id="IPR004873">
    <property type="entry name" value="BURP_dom"/>
</dbReference>
<dbReference type="PANTHER" id="PTHR31236:SF2">
    <property type="entry name" value="BURP DOMAIN PROTEIN RD22"/>
    <property type="match status" value="1"/>
</dbReference>
<dbReference type="PANTHER" id="PTHR31236">
    <property type="entry name" value="BURP DOMAIN PROTEIN USPL1-LIKE"/>
    <property type="match status" value="1"/>
</dbReference>
<dbReference type="Pfam" id="PF03181">
    <property type="entry name" value="BURP"/>
    <property type="match status" value="1"/>
</dbReference>
<dbReference type="SMART" id="SM01045">
    <property type="entry name" value="BURP"/>
    <property type="match status" value="1"/>
</dbReference>
<dbReference type="PROSITE" id="PS51277">
    <property type="entry name" value="BURP"/>
    <property type="match status" value="1"/>
</dbReference>
<feature type="signal peptide" evidence="1">
    <location>
        <begin position="1"/>
        <end position="21"/>
    </location>
</feature>
<feature type="chain" id="PRO_0000375830" description="BURP domain-containing protein 3">
    <location>
        <begin position="22"/>
        <end position="429"/>
    </location>
</feature>
<feature type="domain" description="BURP" evidence="2">
    <location>
        <begin position="213"/>
        <end position="428"/>
    </location>
</feature>
<feature type="region of interest" description="Disordered" evidence="3">
    <location>
        <begin position="59"/>
        <end position="81"/>
    </location>
</feature>
<feature type="sequence conflict" description="In Ref. 5; EAZ13440." evidence="5" ref="5">
    <original>E</original>
    <variation>K</variation>
    <location>
        <position position="288"/>
    </location>
</feature>
<organism>
    <name type="scientific">Oryza sativa subsp. japonica</name>
    <name type="common">Rice</name>
    <dbReference type="NCBI Taxonomy" id="39947"/>
    <lineage>
        <taxon>Eukaryota</taxon>
        <taxon>Viridiplantae</taxon>
        <taxon>Streptophyta</taxon>
        <taxon>Embryophyta</taxon>
        <taxon>Tracheophyta</taxon>
        <taxon>Spermatophyta</taxon>
        <taxon>Magnoliopsida</taxon>
        <taxon>Liliopsida</taxon>
        <taxon>Poales</taxon>
        <taxon>Poaceae</taxon>
        <taxon>BOP clade</taxon>
        <taxon>Oryzoideae</taxon>
        <taxon>Oryzeae</taxon>
        <taxon>Oryzinae</taxon>
        <taxon>Oryza</taxon>
        <taxon>Oryza sativa</taxon>
    </lineage>
</organism>
<evidence type="ECO:0000255" key="1"/>
<evidence type="ECO:0000255" key="2">
    <source>
        <dbReference type="PROSITE-ProRule" id="PRU00604"/>
    </source>
</evidence>
<evidence type="ECO:0000256" key="3">
    <source>
        <dbReference type="SAM" id="MobiDB-lite"/>
    </source>
</evidence>
<evidence type="ECO:0000269" key="4">
    <source>
    </source>
</evidence>
<evidence type="ECO:0000305" key="5"/>
<keyword id="KW-1185">Reference proteome</keyword>
<keyword id="KW-0732">Signal</keyword>
<protein>
    <recommendedName>
        <fullName>BURP domain-containing protein 3</fullName>
        <shortName>OsBURP03</shortName>
    </recommendedName>
</protein>
<comment type="tissue specificity">
    <text evidence="4">Expressed in stems, leaves, shoot, panicles and stamen.</text>
</comment>
<accession>Q942D4</accession>
<accession>A0A0P0V7T9</accession>
<accession>A2ZXJ3</accession>
<reference key="1">
    <citation type="journal article" date="2002" name="Nature">
        <title>The genome sequence and structure of rice chromosome 1.</title>
        <authorList>
            <person name="Sasaki T."/>
            <person name="Matsumoto T."/>
            <person name="Yamamoto K."/>
            <person name="Sakata K."/>
            <person name="Baba T."/>
            <person name="Katayose Y."/>
            <person name="Wu J."/>
            <person name="Niimura Y."/>
            <person name="Cheng Z."/>
            <person name="Nagamura Y."/>
            <person name="Antonio B.A."/>
            <person name="Kanamori H."/>
            <person name="Hosokawa S."/>
            <person name="Masukawa M."/>
            <person name="Arikawa K."/>
            <person name="Chiden Y."/>
            <person name="Hayashi M."/>
            <person name="Okamoto M."/>
            <person name="Ando T."/>
            <person name="Aoki H."/>
            <person name="Arita K."/>
            <person name="Hamada M."/>
            <person name="Harada C."/>
            <person name="Hijishita S."/>
            <person name="Honda M."/>
            <person name="Ichikawa Y."/>
            <person name="Idonuma A."/>
            <person name="Iijima M."/>
            <person name="Ikeda M."/>
            <person name="Ikeno M."/>
            <person name="Ito S."/>
            <person name="Ito T."/>
            <person name="Ito Y."/>
            <person name="Ito Y."/>
            <person name="Iwabuchi A."/>
            <person name="Kamiya K."/>
            <person name="Karasawa W."/>
            <person name="Katagiri S."/>
            <person name="Kikuta A."/>
            <person name="Kobayashi N."/>
            <person name="Kono I."/>
            <person name="Machita K."/>
            <person name="Maehara T."/>
            <person name="Mizuno H."/>
            <person name="Mizubayashi T."/>
            <person name="Mukai Y."/>
            <person name="Nagasaki H."/>
            <person name="Nakashima M."/>
            <person name="Nakama Y."/>
            <person name="Nakamichi Y."/>
            <person name="Nakamura M."/>
            <person name="Namiki N."/>
            <person name="Negishi M."/>
            <person name="Ohta I."/>
            <person name="Ono N."/>
            <person name="Saji S."/>
            <person name="Sakai K."/>
            <person name="Shibata M."/>
            <person name="Shimokawa T."/>
            <person name="Shomura A."/>
            <person name="Song J."/>
            <person name="Takazaki Y."/>
            <person name="Terasawa K."/>
            <person name="Tsuji K."/>
            <person name="Waki K."/>
            <person name="Yamagata H."/>
            <person name="Yamane H."/>
            <person name="Yoshiki S."/>
            <person name="Yoshihara R."/>
            <person name="Yukawa K."/>
            <person name="Zhong H."/>
            <person name="Iwama H."/>
            <person name="Endo T."/>
            <person name="Ito H."/>
            <person name="Hahn J.H."/>
            <person name="Kim H.-I."/>
            <person name="Eun M.-Y."/>
            <person name="Yano M."/>
            <person name="Jiang J."/>
            <person name="Gojobori T."/>
        </authorList>
    </citation>
    <scope>NUCLEOTIDE SEQUENCE [LARGE SCALE GENOMIC DNA]</scope>
    <source>
        <strain>cv. Nipponbare</strain>
    </source>
</reference>
<reference key="2">
    <citation type="journal article" date="2005" name="Nature">
        <title>The map-based sequence of the rice genome.</title>
        <authorList>
            <consortium name="International rice genome sequencing project (IRGSP)"/>
        </authorList>
    </citation>
    <scope>NUCLEOTIDE SEQUENCE [LARGE SCALE GENOMIC DNA]</scope>
    <source>
        <strain>cv. Nipponbare</strain>
    </source>
</reference>
<reference key="3">
    <citation type="journal article" date="2008" name="Nucleic Acids Res.">
        <title>The rice annotation project database (RAP-DB): 2008 update.</title>
        <authorList>
            <consortium name="The rice annotation project (RAP)"/>
        </authorList>
    </citation>
    <scope>GENOME REANNOTATION</scope>
    <source>
        <strain>cv. Nipponbare</strain>
    </source>
</reference>
<reference key="4">
    <citation type="journal article" date="2013" name="Rice">
        <title>Improvement of the Oryza sativa Nipponbare reference genome using next generation sequence and optical map data.</title>
        <authorList>
            <person name="Kawahara Y."/>
            <person name="de la Bastide M."/>
            <person name="Hamilton J.P."/>
            <person name="Kanamori H."/>
            <person name="McCombie W.R."/>
            <person name="Ouyang S."/>
            <person name="Schwartz D.C."/>
            <person name="Tanaka T."/>
            <person name="Wu J."/>
            <person name="Zhou S."/>
            <person name="Childs K.L."/>
            <person name="Davidson R.M."/>
            <person name="Lin H."/>
            <person name="Quesada-Ocampo L."/>
            <person name="Vaillancourt B."/>
            <person name="Sakai H."/>
            <person name="Lee S.S."/>
            <person name="Kim J."/>
            <person name="Numa H."/>
            <person name="Itoh T."/>
            <person name="Buell C.R."/>
            <person name="Matsumoto T."/>
        </authorList>
    </citation>
    <scope>GENOME REANNOTATION</scope>
    <source>
        <strain>cv. Nipponbare</strain>
    </source>
</reference>
<reference key="5">
    <citation type="journal article" date="2005" name="PLoS Biol.">
        <title>The genomes of Oryza sativa: a history of duplications.</title>
        <authorList>
            <person name="Yu J."/>
            <person name="Wang J."/>
            <person name="Lin W."/>
            <person name="Li S."/>
            <person name="Li H."/>
            <person name="Zhou J."/>
            <person name="Ni P."/>
            <person name="Dong W."/>
            <person name="Hu S."/>
            <person name="Zeng C."/>
            <person name="Zhang J."/>
            <person name="Zhang Y."/>
            <person name="Li R."/>
            <person name="Xu Z."/>
            <person name="Li S."/>
            <person name="Li X."/>
            <person name="Zheng H."/>
            <person name="Cong L."/>
            <person name="Lin L."/>
            <person name="Yin J."/>
            <person name="Geng J."/>
            <person name="Li G."/>
            <person name="Shi J."/>
            <person name="Liu J."/>
            <person name="Lv H."/>
            <person name="Li J."/>
            <person name="Wang J."/>
            <person name="Deng Y."/>
            <person name="Ran L."/>
            <person name="Shi X."/>
            <person name="Wang X."/>
            <person name="Wu Q."/>
            <person name="Li C."/>
            <person name="Ren X."/>
            <person name="Wang J."/>
            <person name="Wang X."/>
            <person name="Li D."/>
            <person name="Liu D."/>
            <person name="Zhang X."/>
            <person name="Ji Z."/>
            <person name="Zhao W."/>
            <person name="Sun Y."/>
            <person name="Zhang Z."/>
            <person name="Bao J."/>
            <person name="Han Y."/>
            <person name="Dong L."/>
            <person name="Ji J."/>
            <person name="Chen P."/>
            <person name="Wu S."/>
            <person name="Liu J."/>
            <person name="Xiao Y."/>
            <person name="Bu D."/>
            <person name="Tan J."/>
            <person name="Yang L."/>
            <person name="Ye C."/>
            <person name="Zhang J."/>
            <person name="Xu J."/>
            <person name="Zhou Y."/>
            <person name="Yu Y."/>
            <person name="Zhang B."/>
            <person name="Zhuang S."/>
            <person name="Wei H."/>
            <person name="Liu B."/>
            <person name="Lei M."/>
            <person name="Yu H."/>
            <person name="Li Y."/>
            <person name="Xu H."/>
            <person name="Wei S."/>
            <person name="He X."/>
            <person name="Fang L."/>
            <person name="Zhang Z."/>
            <person name="Zhang Y."/>
            <person name="Huang X."/>
            <person name="Su Z."/>
            <person name="Tong W."/>
            <person name="Li J."/>
            <person name="Tong Z."/>
            <person name="Li S."/>
            <person name="Ye J."/>
            <person name="Wang L."/>
            <person name="Fang L."/>
            <person name="Lei T."/>
            <person name="Chen C.-S."/>
            <person name="Chen H.-C."/>
            <person name="Xu Z."/>
            <person name="Li H."/>
            <person name="Huang H."/>
            <person name="Zhang F."/>
            <person name="Xu H."/>
            <person name="Li N."/>
            <person name="Zhao C."/>
            <person name="Li S."/>
            <person name="Dong L."/>
            <person name="Huang Y."/>
            <person name="Li L."/>
            <person name="Xi Y."/>
            <person name="Qi Q."/>
            <person name="Li W."/>
            <person name="Zhang B."/>
            <person name="Hu W."/>
            <person name="Zhang Y."/>
            <person name="Tian X."/>
            <person name="Jiao Y."/>
            <person name="Liang X."/>
            <person name="Jin J."/>
            <person name="Gao L."/>
            <person name="Zheng W."/>
            <person name="Hao B."/>
            <person name="Liu S.-M."/>
            <person name="Wang W."/>
            <person name="Yuan L."/>
            <person name="Cao M."/>
            <person name="McDermott J."/>
            <person name="Samudrala R."/>
            <person name="Wang J."/>
            <person name="Wong G.K.-S."/>
            <person name="Yang H."/>
        </authorList>
    </citation>
    <scope>NUCLEOTIDE SEQUENCE [LARGE SCALE GENOMIC DNA]</scope>
    <source>
        <strain>cv. Nipponbare</strain>
    </source>
</reference>
<reference key="6">
    <citation type="journal article" date="2003" name="Science">
        <title>Collection, mapping, and annotation of over 28,000 cDNA clones from japonica rice.</title>
        <authorList>
            <consortium name="The rice full-length cDNA consortium"/>
        </authorList>
    </citation>
    <scope>NUCLEOTIDE SEQUENCE [LARGE SCALE MRNA]</scope>
    <source>
        <strain>cv. Nipponbare</strain>
    </source>
</reference>
<reference key="7">
    <citation type="journal article" date="2009" name="Planta">
        <title>Genome-wide identification of BURP domain-containing genes in rice reveals a gene family with diverse structures and responses to abiotic stresses.</title>
        <authorList>
            <person name="Ding X."/>
            <person name="Hou X."/>
            <person name="Xie K."/>
            <person name="Xiong L."/>
        </authorList>
    </citation>
    <scope>TISSUE SPECIFICITY</scope>
    <scope>GENE NOMENCLATURE</scope>
</reference>
<name>BURP3_ORYSJ</name>
<gene>
    <name type="primary">BURP3</name>
    <name type="ordered locus">Os01g0733500</name>
    <name type="ordered locus">LOC_Os01g53240</name>
    <name type="ORF">B1060H01.8</name>
    <name type="ORF">OsJ_03360</name>
    <name type="ORF">OSJNBb0036G09.19</name>
</gene>